<proteinExistence type="evidence at protein level"/>
<comment type="function">
    <text evidence="6 7">Pleiotropic ABC efflux transporter that confers resistance to structurally and functionally unrelated compounds including azoles such as fluconazole (FLC), itraconazole (ITC), posaconazole (POS), and voriconazole (VRC).</text>
</comment>
<comment type="catalytic activity">
    <reaction evidence="6">
        <text>itraconazole(in) + ATP + H2O = itraconazole(out) + ADP + phosphate + H(+)</text>
        <dbReference type="Rhea" id="RHEA:33503"/>
        <dbReference type="ChEBI" id="CHEBI:6076"/>
        <dbReference type="ChEBI" id="CHEBI:15377"/>
        <dbReference type="ChEBI" id="CHEBI:15378"/>
        <dbReference type="ChEBI" id="CHEBI:30616"/>
        <dbReference type="ChEBI" id="CHEBI:43474"/>
        <dbReference type="ChEBI" id="CHEBI:456216"/>
    </reaction>
    <physiologicalReaction direction="left-to-right" evidence="6">
        <dbReference type="Rhea" id="RHEA:33504"/>
    </physiologicalReaction>
</comment>
<comment type="catalytic activity">
    <reaction evidence="6">
        <text>voriconazole(in) + ATP + H2O = voriconazole(out) + ADP + phosphate + H(+)</text>
        <dbReference type="Rhea" id="RHEA:61912"/>
        <dbReference type="ChEBI" id="CHEBI:10023"/>
        <dbReference type="ChEBI" id="CHEBI:15377"/>
        <dbReference type="ChEBI" id="CHEBI:15378"/>
        <dbReference type="ChEBI" id="CHEBI:30616"/>
        <dbReference type="ChEBI" id="CHEBI:43474"/>
        <dbReference type="ChEBI" id="CHEBI:456216"/>
    </reaction>
    <physiologicalReaction direction="left-to-right" evidence="6">
        <dbReference type="Rhea" id="RHEA:61913"/>
    </physiologicalReaction>
</comment>
<comment type="catalytic activity">
    <reaction evidence="6">
        <text>fluconazole(in) + ATP + H2O = fluconazole(out) + ADP + phosphate + H(+)</text>
        <dbReference type="Rhea" id="RHEA:61916"/>
        <dbReference type="ChEBI" id="CHEBI:15377"/>
        <dbReference type="ChEBI" id="CHEBI:15378"/>
        <dbReference type="ChEBI" id="CHEBI:30616"/>
        <dbReference type="ChEBI" id="CHEBI:43474"/>
        <dbReference type="ChEBI" id="CHEBI:46081"/>
        <dbReference type="ChEBI" id="CHEBI:456216"/>
    </reaction>
    <physiologicalReaction direction="left-to-right" evidence="6">
        <dbReference type="Rhea" id="RHEA:61917"/>
    </physiologicalReaction>
</comment>
<comment type="biophysicochemical properties">
    <kinetics>
        <KM evidence="6">0.11 uM for fluconazole transport</KM>
        <Vmax evidence="6">1.46 pmol/min/mg enzyme for fluconazole transport</Vmax>
    </kinetics>
</comment>
<comment type="subcellular location">
    <subcellularLocation>
        <location evidence="6">Cell membrane</location>
        <topology evidence="1">Multi-pass membrane protein</topology>
    </subcellularLocation>
</comment>
<comment type="disruption phenotype">
    <text evidence="7">Causes higher susceptibility to itraconazole (ITC) and rhodamine 6G (R-6G) (PubMed:29378705). Causes further increase in susceptibility toward fluconazole and itraconazole, when AFR1 and MDR1 are also deleted (PubMed:29378705).</text>
</comment>
<comment type="similarity">
    <text evidence="9">Belongs to the ABC transporter superfamily. ABCB family. Multidrug resistance exporter (TC 3.A.1.201) subfamily.</text>
</comment>
<gene>
    <name evidence="8" type="primary">MDR1</name>
    <name type="ORF">CNAG_00796</name>
</gene>
<accession>J9VF33</accession>
<name>MDR1_CRYNH</name>
<keyword id="KW-0067">ATP-binding</keyword>
<keyword id="KW-1003">Cell membrane</keyword>
<keyword id="KW-0325">Glycoprotein</keyword>
<keyword id="KW-0472">Membrane</keyword>
<keyword id="KW-0547">Nucleotide-binding</keyword>
<keyword id="KW-0677">Repeat</keyword>
<keyword id="KW-0812">Transmembrane</keyword>
<keyword id="KW-1133">Transmembrane helix</keyword>
<keyword id="KW-0813">Transport</keyword>
<organism>
    <name type="scientific">Cryptococcus neoformans var. grubii serotype A (strain H99 / ATCC 208821 / CBS 10515 / FGSC 9487)</name>
    <name type="common">Filobasidiella neoformans var. grubii</name>
    <dbReference type="NCBI Taxonomy" id="235443"/>
    <lineage>
        <taxon>Eukaryota</taxon>
        <taxon>Fungi</taxon>
        <taxon>Dikarya</taxon>
        <taxon>Basidiomycota</taxon>
        <taxon>Agaricomycotina</taxon>
        <taxon>Tremellomycetes</taxon>
        <taxon>Tremellales</taxon>
        <taxon>Cryptococcaceae</taxon>
        <taxon>Cryptococcus</taxon>
        <taxon>Cryptococcus neoformans species complex</taxon>
    </lineage>
</organism>
<protein>
    <recommendedName>
        <fullName evidence="8">ABC multidrug transporter MDR1</fullName>
    </recommendedName>
</protein>
<evidence type="ECO:0000255" key="1"/>
<evidence type="ECO:0000255" key="2">
    <source>
        <dbReference type="PROSITE-ProRule" id="PRU00434"/>
    </source>
</evidence>
<evidence type="ECO:0000255" key="3">
    <source>
        <dbReference type="PROSITE-ProRule" id="PRU00441"/>
    </source>
</evidence>
<evidence type="ECO:0000255" key="4">
    <source>
        <dbReference type="PROSITE-ProRule" id="PRU00498"/>
    </source>
</evidence>
<evidence type="ECO:0000256" key="5">
    <source>
        <dbReference type="SAM" id="MobiDB-lite"/>
    </source>
</evidence>
<evidence type="ECO:0000269" key="6">
    <source>
    </source>
</evidence>
<evidence type="ECO:0000269" key="7">
    <source>
    </source>
</evidence>
<evidence type="ECO:0000303" key="8">
    <source>
    </source>
</evidence>
<evidence type="ECO:0000305" key="9"/>
<feature type="chain" id="PRO_0000452667" description="ABC multidrug transporter MDR1">
    <location>
        <begin position="1"/>
        <end position="1408"/>
    </location>
</feature>
<feature type="transmembrane region" description="Helical" evidence="1 3">
    <location>
        <begin position="147"/>
        <end position="167"/>
    </location>
</feature>
<feature type="transmembrane region" description="Helical" evidence="1 3">
    <location>
        <begin position="223"/>
        <end position="243"/>
    </location>
</feature>
<feature type="transmembrane region" description="Helical" evidence="1 3">
    <location>
        <begin position="296"/>
        <end position="316"/>
    </location>
</feature>
<feature type="transmembrane region" description="Helical" evidence="1 3">
    <location>
        <begin position="321"/>
        <end position="341"/>
    </location>
</feature>
<feature type="transmembrane region" description="Helical" evidence="1 3">
    <location>
        <begin position="408"/>
        <end position="428"/>
    </location>
</feature>
<feature type="transmembrane region" description="Helical" evidence="1 3">
    <location>
        <begin position="436"/>
        <end position="456"/>
    </location>
</feature>
<feature type="transmembrane region" description="Helical" evidence="1 3">
    <location>
        <begin position="838"/>
        <end position="858"/>
    </location>
</feature>
<feature type="transmembrane region" description="Helical" evidence="1 3">
    <location>
        <begin position="882"/>
        <end position="902"/>
    </location>
</feature>
<feature type="transmembrane region" description="Helical" evidence="1 3">
    <location>
        <begin position="952"/>
        <end position="972"/>
    </location>
</feature>
<feature type="transmembrane region" description="Helical" evidence="1 3">
    <location>
        <begin position="981"/>
        <end position="999"/>
    </location>
</feature>
<feature type="transmembrane region" description="Helical" evidence="1 3">
    <location>
        <begin position="1072"/>
        <end position="1092"/>
    </location>
</feature>
<feature type="transmembrane region" description="Helical" evidence="1 3">
    <location>
        <begin position="1099"/>
        <end position="1119"/>
    </location>
</feature>
<feature type="domain" description="ABC transmembrane type-1 1" evidence="3">
    <location>
        <begin position="157"/>
        <end position="464"/>
    </location>
</feature>
<feature type="domain" description="ABC transporter 1" evidence="2">
    <location>
        <begin position="499"/>
        <end position="744"/>
    </location>
</feature>
<feature type="domain" description="ABC transmembrane type-1 2" evidence="3">
    <location>
        <begin position="838"/>
        <end position="1125"/>
    </location>
</feature>
<feature type="domain" description="ABC transporter 2" evidence="2">
    <location>
        <begin position="1162"/>
        <end position="1402"/>
    </location>
</feature>
<feature type="region of interest" description="Disordered" evidence="5">
    <location>
        <begin position="79"/>
        <end position="102"/>
    </location>
</feature>
<feature type="compositionally biased region" description="Polar residues" evidence="5">
    <location>
        <begin position="79"/>
        <end position="88"/>
    </location>
</feature>
<feature type="binding site" evidence="2">
    <location>
        <begin position="534"/>
        <end position="541"/>
    </location>
    <ligand>
        <name>ATP</name>
        <dbReference type="ChEBI" id="CHEBI:30616"/>
    </ligand>
</feature>
<feature type="binding site" evidence="2">
    <location>
        <begin position="1197"/>
        <end position="1204"/>
    </location>
    <ligand>
        <name>ATP</name>
        <dbReference type="ChEBI" id="CHEBI:30616"/>
    </ligand>
</feature>
<feature type="glycosylation site" description="N-linked (GlcNAc...) asparagine" evidence="4">
    <location>
        <position position="244"/>
    </location>
</feature>
<feature type="glycosylation site" description="N-linked (GlcNAc...) asparagine" evidence="4">
    <location>
        <position position="606"/>
    </location>
</feature>
<feature type="glycosylation site" description="N-linked (GlcNAc...) asparagine" evidence="4">
    <location>
        <position position="934"/>
    </location>
</feature>
<feature type="glycosylation site" description="N-linked (GlcNAc...) asparagine" evidence="4">
    <location>
        <position position="1127"/>
    </location>
</feature>
<feature type="glycosylation site" description="N-linked (GlcNAc...) asparagine" evidence="4">
    <location>
        <position position="1182"/>
    </location>
</feature>
<feature type="glycosylation site" description="N-linked (GlcNAc...) asparagine" evidence="4">
    <location>
        <position position="1404"/>
    </location>
</feature>
<dbReference type="EMBL" id="CP003820">
    <property type="protein sequence ID" value="AFR92927.1"/>
    <property type="molecule type" value="Genomic_DNA"/>
</dbReference>
<dbReference type="RefSeq" id="XP_012046966.1">
    <property type="nucleotide sequence ID" value="XM_012191576.1"/>
</dbReference>
<dbReference type="SMR" id="J9VF33"/>
<dbReference type="GlyCosmos" id="J9VF33">
    <property type="glycosylation" value="6 sites, No reported glycans"/>
</dbReference>
<dbReference type="GeneID" id="23884573"/>
<dbReference type="KEGG" id="cng:CNAG_00796"/>
<dbReference type="VEuPathDB" id="FungiDB:CNAG_00796"/>
<dbReference type="HOGENOM" id="CLU_000604_17_2_1"/>
<dbReference type="OrthoDB" id="5730at5206"/>
<dbReference type="Proteomes" id="UP000010091">
    <property type="component" value="Chromosome 1"/>
</dbReference>
<dbReference type="GO" id="GO:0005743">
    <property type="term" value="C:mitochondrial inner membrane"/>
    <property type="evidence" value="ECO:0007669"/>
    <property type="project" value="TreeGrafter"/>
</dbReference>
<dbReference type="GO" id="GO:0005886">
    <property type="term" value="C:plasma membrane"/>
    <property type="evidence" value="ECO:0007669"/>
    <property type="project" value="UniProtKB-SubCell"/>
</dbReference>
<dbReference type="GO" id="GO:0015421">
    <property type="term" value="F:ABC-type oligopeptide transporter activity"/>
    <property type="evidence" value="ECO:0007669"/>
    <property type="project" value="TreeGrafter"/>
</dbReference>
<dbReference type="GO" id="GO:0005524">
    <property type="term" value="F:ATP binding"/>
    <property type="evidence" value="ECO:0007669"/>
    <property type="project" value="UniProtKB-KW"/>
</dbReference>
<dbReference type="GO" id="GO:0016887">
    <property type="term" value="F:ATP hydrolysis activity"/>
    <property type="evidence" value="ECO:0007669"/>
    <property type="project" value="InterPro"/>
</dbReference>
<dbReference type="GO" id="GO:0090374">
    <property type="term" value="P:oligopeptide export from mitochondrion"/>
    <property type="evidence" value="ECO:0007669"/>
    <property type="project" value="TreeGrafter"/>
</dbReference>
<dbReference type="CDD" id="cd18577">
    <property type="entry name" value="ABC_6TM_Pgp_ABCB1_D1_like"/>
    <property type="match status" value="1"/>
</dbReference>
<dbReference type="CDD" id="cd18578">
    <property type="entry name" value="ABC_6TM_Pgp_ABCB1_D2_like"/>
    <property type="match status" value="1"/>
</dbReference>
<dbReference type="CDD" id="cd03249">
    <property type="entry name" value="ABC_MTABC3_MDL1_MDL2"/>
    <property type="match status" value="2"/>
</dbReference>
<dbReference type="FunFam" id="1.20.1560.10:FF:000102">
    <property type="entry name" value="ABC multidrug transporter Mdr1"/>
    <property type="match status" value="1"/>
</dbReference>
<dbReference type="FunFam" id="3.40.50.300:FF:000066">
    <property type="entry name" value="ABC transporter B family member 1"/>
    <property type="match status" value="1"/>
</dbReference>
<dbReference type="FunFam" id="3.40.50.300:FF:001370">
    <property type="entry name" value="p-GlycoProtein related"/>
    <property type="match status" value="1"/>
</dbReference>
<dbReference type="Gene3D" id="1.20.1560.10">
    <property type="entry name" value="ABC transporter type 1, transmembrane domain"/>
    <property type="match status" value="1"/>
</dbReference>
<dbReference type="Gene3D" id="3.40.50.300">
    <property type="entry name" value="P-loop containing nucleotide triphosphate hydrolases"/>
    <property type="match status" value="2"/>
</dbReference>
<dbReference type="InterPro" id="IPR003593">
    <property type="entry name" value="AAA+_ATPase"/>
</dbReference>
<dbReference type="InterPro" id="IPR011527">
    <property type="entry name" value="ABC1_TM_dom"/>
</dbReference>
<dbReference type="InterPro" id="IPR036640">
    <property type="entry name" value="ABC1_TM_sf"/>
</dbReference>
<dbReference type="InterPro" id="IPR003439">
    <property type="entry name" value="ABC_transporter-like_ATP-bd"/>
</dbReference>
<dbReference type="InterPro" id="IPR017871">
    <property type="entry name" value="ABC_transporter-like_CS"/>
</dbReference>
<dbReference type="InterPro" id="IPR027417">
    <property type="entry name" value="P-loop_NTPase"/>
</dbReference>
<dbReference type="InterPro" id="IPR039421">
    <property type="entry name" value="Type_1_exporter"/>
</dbReference>
<dbReference type="PANTHER" id="PTHR43394">
    <property type="entry name" value="ATP-DEPENDENT PERMEASE MDL1, MITOCHONDRIAL"/>
    <property type="match status" value="1"/>
</dbReference>
<dbReference type="PANTHER" id="PTHR43394:SF27">
    <property type="entry name" value="ATP-DEPENDENT TRANSLOCASE ABCB1-LIKE"/>
    <property type="match status" value="1"/>
</dbReference>
<dbReference type="Pfam" id="PF00664">
    <property type="entry name" value="ABC_membrane"/>
    <property type="match status" value="2"/>
</dbReference>
<dbReference type="Pfam" id="PF00005">
    <property type="entry name" value="ABC_tran"/>
    <property type="match status" value="2"/>
</dbReference>
<dbReference type="SMART" id="SM00382">
    <property type="entry name" value="AAA"/>
    <property type="match status" value="2"/>
</dbReference>
<dbReference type="SUPFAM" id="SSF90123">
    <property type="entry name" value="ABC transporter transmembrane region"/>
    <property type="match status" value="2"/>
</dbReference>
<dbReference type="SUPFAM" id="SSF52540">
    <property type="entry name" value="P-loop containing nucleoside triphosphate hydrolases"/>
    <property type="match status" value="2"/>
</dbReference>
<dbReference type="PROSITE" id="PS50929">
    <property type="entry name" value="ABC_TM1F"/>
    <property type="match status" value="2"/>
</dbReference>
<dbReference type="PROSITE" id="PS00211">
    <property type="entry name" value="ABC_TRANSPORTER_1"/>
    <property type="match status" value="2"/>
</dbReference>
<dbReference type="PROSITE" id="PS50893">
    <property type="entry name" value="ABC_TRANSPORTER_2"/>
    <property type="match status" value="2"/>
</dbReference>
<sequence length="1408" mass="152145">MSASPGLTAAAAGPDHLQARRDEKVIDSEKDALAHDAHAVNSGIPYPTATAPNVGAPTVPISVGRVSSAAEGKISRSSIAASSDTLRNSPLEKPISNAFSKSHPYKKSKFDFLKSRKKKEEEERKNKEKEKEASVLPPVSFFALFRFAAPLEIIAMVLGLVLAVAAGSCQPLMTLIFGRLTTSFTNYAVIANQISQGGLTPETSAALQAAKDDLKTQSGHNALYLMAIGIGMFLATWLYMFIWNVTGELNSKRIRERYLAAVLRQEIAYFDDLGAGEVATRIQTDCHLVQEGTSEKVALVFQYAGTFVCGFVLAFVRSPRLAGALVSILPVIMLCGGIMMTAMAKYGTAALDHIAKAGSLAEEVIGSIRTVQAFGKEKILGDKFADHIEQSKIVGRKGSIFEGFGLSIMFFVIYAAYALAFFYGGILVSNGQADSGIVINVFMSILIGSFSMAMLAPELAAVTKARGAAAKLFATIDRVPAIDSASEEGFKPDGLRGEISFENVKFHYPSRPSIPILKGFTTTFEAGKTFALVGASGSGKSTVVSLIERFYDPVSGVVKLDGRDIRSLNLNWLRQQIGLVSQEPTLFGTTVRGNVEHGLIGSRYENASLEEKFELVKKACVDANAHNFIMKLPQGYDTMVGERGMLLSGGQKQRVAIARAIVSDPRILLLDEATSALDTQSEGIVQDALDKASRGRTTITIAHRLSTIRDADRIYVMGGGEVLEQGSHNDLLANENGPYAQLVNNQKLAQEAAAEALQVDDDIEDPDDAVFIGGSSPMQEKDKQLHRAVTGRSLASIAMDDIQAKRAEEVAGEDKIPSSFGLYARLLRMNSADKFIYIIAFIAAICAGMVYPSLAILFGKALSDFEIQDPAELRHALSRSALWYFITALAAAFVIFFQSAGFSRAGWDLNGVLRKKLFTATLRHDIEWFDEERNSTGAVTSNLADQPQKVQGLFGPTLGTVVQSCATLIGGCIIGLCYGPLLALIGIACIPILVSGGYIRLKVVVLKDQRMKKLHAASAHLASEAAGAVKTVASLTREKDVRRIYSEALKAPMKLNFRTSIKSQCLFAASQGLTFCIIALVFYIGALWIIDAKYSTASFYTVLNSIVFASIQAGNVFTFVPDASKANSSAASIFRSIDNEPAINAESNEGKVLDHKHVVGHVRIEGVHFRYPTRPGVRVLRNLTIDVPAGTYVALVGPSGCGKSTTIQMLERFYDPLAGRVTLDGIDIKELNLASYRSQISLVSQEPTLYAGTIRFNILLGANKPIEEVTQDEIDAACKDANIYDFIVSLPDGFDTEVGGKGSQLSGGQKQRIAIARALIRNPKVLLLDEATSALDSQSEKVVQEALDKAAKGRTTIAIAHRLSSIQHSDRIYYFSEGRVAEHGTHQELLAKKGGYYELVQMQNLSRQ</sequence>
<reference key="1">
    <citation type="journal article" date="2014" name="PLoS Genet.">
        <title>Analysis of the genome and transcriptome of Cryptococcus neoformans var. grubii reveals complex RNA expression and microevolution leading to virulence attenuation.</title>
        <authorList>
            <person name="Janbon G."/>
            <person name="Ormerod K.L."/>
            <person name="Paulet D."/>
            <person name="Byrnes E.J. III"/>
            <person name="Yadav V."/>
            <person name="Chatterjee G."/>
            <person name="Mullapudi N."/>
            <person name="Hon C.-C."/>
            <person name="Billmyre R.B."/>
            <person name="Brunel F."/>
            <person name="Bahn Y.-S."/>
            <person name="Chen W."/>
            <person name="Chen Y."/>
            <person name="Chow E.W.L."/>
            <person name="Coppee J.-Y."/>
            <person name="Floyd-Averette A."/>
            <person name="Gaillardin C."/>
            <person name="Gerik K.J."/>
            <person name="Goldberg J."/>
            <person name="Gonzalez-Hilarion S."/>
            <person name="Gujja S."/>
            <person name="Hamlin J.L."/>
            <person name="Hsueh Y.-P."/>
            <person name="Ianiri G."/>
            <person name="Jones S."/>
            <person name="Kodira C.D."/>
            <person name="Kozubowski L."/>
            <person name="Lam W."/>
            <person name="Marra M."/>
            <person name="Mesner L.D."/>
            <person name="Mieczkowski P.A."/>
            <person name="Moyrand F."/>
            <person name="Nielsen K."/>
            <person name="Proux C."/>
            <person name="Rossignol T."/>
            <person name="Schein J.E."/>
            <person name="Sun S."/>
            <person name="Wollschlaeger C."/>
            <person name="Wood I.A."/>
            <person name="Zeng Q."/>
            <person name="Neuveglise C."/>
            <person name="Newlon C.S."/>
            <person name="Perfect J.R."/>
            <person name="Lodge J.K."/>
            <person name="Idnurm A."/>
            <person name="Stajich J.E."/>
            <person name="Kronstad J.W."/>
            <person name="Sanyal K."/>
            <person name="Heitman J."/>
            <person name="Fraser J.A."/>
            <person name="Cuomo C.A."/>
            <person name="Dietrich F.S."/>
        </authorList>
    </citation>
    <scope>NUCLEOTIDE SEQUENCE [LARGE SCALE GENOMIC DNA]</scope>
    <source>
        <strain>H99 / ATCC 208821 / CBS 10515 / FGSC 9487</strain>
    </source>
</reference>
<reference key="2">
    <citation type="journal article" date="2015" name="J. Antimicrob. Chemother.">
        <title>Identification and properties of plasma membrane azole efflux pumps from the pathogenic fungi Cryptococcus gattii and Cryptococcus neoformans.</title>
        <authorList>
            <person name="Basso L.R. Jr."/>
            <person name="Gast C.E."/>
            <person name="Bruzual I."/>
            <person name="Wong B."/>
        </authorList>
    </citation>
    <scope>FUNCTION</scope>
    <scope>CATALYTIC ACTIVITY</scope>
    <scope>SUBSTRATE SPECIFICITY</scope>
    <scope>BIOPHYSICOCHEMICAL PROPERTIES</scope>
    <scope>SUBCELLULAR LOCATION</scope>
</reference>
<reference key="3">
    <citation type="journal article" date="2018" name="Antimicrob. Agents Chemother.">
        <title>Roles of three Cryptococcus neoformans and Cryptococcus gattii efflux pump-coding genes in response to drug treatment.</title>
        <authorList>
            <person name="Chang M."/>
            <person name="Sionov E."/>
            <person name="Khanal Lamichhane A."/>
            <person name="Kwon-Chung K.J."/>
            <person name="Chang Y.C."/>
        </authorList>
    </citation>
    <scope>FUNCTION</scope>
    <scope>DISRUPTION PHENOTYPE</scope>
</reference>